<accession>Q5WFU4</accession>
<feature type="chain" id="PRO_0000102620" description="Ribosome-binding factor A">
    <location>
        <begin position="1"/>
        <end position="118"/>
    </location>
</feature>
<evidence type="ECO:0000255" key="1">
    <source>
        <dbReference type="HAMAP-Rule" id="MF_00003"/>
    </source>
</evidence>
<reference key="1">
    <citation type="submission" date="2003-10" db="EMBL/GenBank/DDBJ databases">
        <title>The complete genome sequence of the alkaliphilic Bacillus clausii KSM-K16.</title>
        <authorList>
            <person name="Takaki Y."/>
            <person name="Kageyama Y."/>
            <person name="Shimamura S."/>
            <person name="Suzuki H."/>
            <person name="Nishi S."/>
            <person name="Hatada Y."/>
            <person name="Kawai S."/>
            <person name="Ito S."/>
            <person name="Horikoshi K."/>
        </authorList>
    </citation>
    <scope>NUCLEOTIDE SEQUENCE [LARGE SCALE GENOMIC DNA]</scope>
    <source>
        <strain>KSM-K16</strain>
    </source>
</reference>
<proteinExistence type="inferred from homology"/>
<keyword id="KW-0963">Cytoplasm</keyword>
<keyword id="KW-1185">Reference proteome</keyword>
<keyword id="KW-0690">Ribosome biogenesis</keyword>
<sequence>MANNRAVRVGEQMKKELSDILIRDIKDPRVRFVTVTGVDVTGDLQQATAFITVLGDEEERKATLAGLEKAKGFIRTELGKRIRLRKTPELSFSFDESIQYGNRIESLLRDLNKNDSNE</sequence>
<organism>
    <name type="scientific">Shouchella clausii (strain KSM-K16)</name>
    <name type="common">Alkalihalobacillus clausii</name>
    <dbReference type="NCBI Taxonomy" id="66692"/>
    <lineage>
        <taxon>Bacteria</taxon>
        <taxon>Bacillati</taxon>
        <taxon>Bacillota</taxon>
        <taxon>Bacilli</taxon>
        <taxon>Bacillales</taxon>
        <taxon>Bacillaceae</taxon>
        <taxon>Shouchella</taxon>
    </lineage>
</organism>
<gene>
    <name evidence="1" type="primary">rbfA</name>
    <name type="ordered locus">ABC2226</name>
</gene>
<name>RBFA_SHOC1</name>
<protein>
    <recommendedName>
        <fullName evidence="1">Ribosome-binding factor A</fullName>
    </recommendedName>
</protein>
<comment type="function">
    <text evidence="1">One of several proteins that assist in the late maturation steps of the functional core of the 30S ribosomal subunit. Associates with free 30S ribosomal subunits (but not with 30S subunits that are part of 70S ribosomes or polysomes). Required for efficient processing of 16S rRNA. May interact with the 5'-terminal helix region of 16S rRNA.</text>
</comment>
<comment type="subunit">
    <text evidence="1">Monomer. Binds 30S ribosomal subunits, but not 50S ribosomal subunits or 70S ribosomes.</text>
</comment>
<comment type="subcellular location">
    <subcellularLocation>
        <location evidence="1">Cytoplasm</location>
    </subcellularLocation>
</comment>
<comment type="similarity">
    <text evidence="1">Belongs to the RbfA family.</text>
</comment>
<dbReference type="EMBL" id="AP006627">
    <property type="protein sequence ID" value="BAD64761.1"/>
    <property type="molecule type" value="Genomic_DNA"/>
</dbReference>
<dbReference type="RefSeq" id="WP_011247069.1">
    <property type="nucleotide sequence ID" value="NC_006582.1"/>
</dbReference>
<dbReference type="SMR" id="Q5WFU4"/>
<dbReference type="STRING" id="66692.ABC2226"/>
<dbReference type="KEGG" id="bcl:ABC2226"/>
<dbReference type="eggNOG" id="COG0858">
    <property type="taxonomic scope" value="Bacteria"/>
</dbReference>
<dbReference type="HOGENOM" id="CLU_089475_6_3_9"/>
<dbReference type="OrthoDB" id="307788at2"/>
<dbReference type="Proteomes" id="UP000001168">
    <property type="component" value="Chromosome"/>
</dbReference>
<dbReference type="GO" id="GO:0005829">
    <property type="term" value="C:cytosol"/>
    <property type="evidence" value="ECO:0007669"/>
    <property type="project" value="TreeGrafter"/>
</dbReference>
<dbReference type="GO" id="GO:0043024">
    <property type="term" value="F:ribosomal small subunit binding"/>
    <property type="evidence" value="ECO:0007669"/>
    <property type="project" value="TreeGrafter"/>
</dbReference>
<dbReference type="GO" id="GO:0030490">
    <property type="term" value="P:maturation of SSU-rRNA"/>
    <property type="evidence" value="ECO:0007669"/>
    <property type="project" value="UniProtKB-UniRule"/>
</dbReference>
<dbReference type="FunFam" id="3.30.300.20:FF:000009">
    <property type="entry name" value="Ribosome-binding factor A"/>
    <property type="match status" value="1"/>
</dbReference>
<dbReference type="Gene3D" id="3.30.300.20">
    <property type="match status" value="1"/>
</dbReference>
<dbReference type="HAMAP" id="MF_00003">
    <property type="entry name" value="RbfA"/>
    <property type="match status" value="1"/>
</dbReference>
<dbReference type="InterPro" id="IPR015946">
    <property type="entry name" value="KH_dom-like_a/b"/>
</dbReference>
<dbReference type="InterPro" id="IPR000238">
    <property type="entry name" value="RbfA"/>
</dbReference>
<dbReference type="InterPro" id="IPR023799">
    <property type="entry name" value="RbfA_dom_sf"/>
</dbReference>
<dbReference type="InterPro" id="IPR020053">
    <property type="entry name" value="Ribosome-bd_factorA_CS"/>
</dbReference>
<dbReference type="NCBIfam" id="TIGR00082">
    <property type="entry name" value="rbfA"/>
    <property type="match status" value="1"/>
</dbReference>
<dbReference type="PANTHER" id="PTHR33515">
    <property type="entry name" value="RIBOSOME-BINDING FACTOR A, CHLOROPLASTIC-RELATED"/>
    <property type="match status" value="1"/>
</dbReference>
<dbReference type="PANTHER" id="PTHR33515:SF1">
    <property type="entry name" value="RIBOSOME-BINDING FACTOR A, CHLOROPLASTIC-RELATED"/>
    <property type="match status" value="1"/>
</dbReference>
<dbReference type="Pfam" id="PF02033">
    <property type="entry name" value="RBFA"/>
    <property type="match status" value="1"/>
</dbReference>
<dbReference type="SUPFAM" id="SSF89919">
    <property type="entry name" value="Ribosome-binding factor A, RbfA"/>
    <property type="match status" value="1"/>
</dbReference>
<dbReference type="PROSITE" id="PS01319">
    <property type="entry name" value="RBFA"/>
    <property type="match status" value="1"/>
</dbReference>